<reference key="1">
    <citation type="journal article" date="2001" name="Genome Res.">
        <title>The complete genome sequence of the lactic acid bacterium Lactococcus lactis ssp. lactis IL1403.</title>
        <authorList>
            <person name="Bolotin A."/>
            <person name="Wincker P."/>
            <person name="Mauger S."/>
            <person name="Jaillon O."/>
            <person name="Malarme K."/>
            <person name="Weissenbach J."/>
            <person name="Ehrlich S.D."/>
            <person name="Sorokin A."/>
        </authorList>
    </citation>
    <scope>NUCLEOTIDE SEQUENCE [LARGE SCALE GENOMIC DNA]</scope>
    <source>
        <strain>IL1403</strain>
    </source>
</reference>
<dbReference type="EMBL" id="AE005176">
    <property type="protein sequence ID" value="AAK05419.1"/>
    <property type="molecule type" value="Genomic_DNA"/>
</dbReference>
<dbReference type="PIR" id="A86790">
    <property type="entry name" value="A86790"/>
</dbReference>
<dbReference type="RefSeq" id="NP_267477.1">
    <property type="nucleotide sequence ID" value="NC_002662.1"/>
</dbReference>
<dbReference type="RefSeq" id="WP_010905885.1">
    <property type="nucleotide sequence ID" value="NC_002662.1"/>
</dbReference>
<dbReference type="SMR" id="Q9CFZ0"/>
<dbReference type="PaxDb" id="272623-L152588"/>
<dbReference type="EnsemblBacteria" id="AAK05419">
    <property type="protein sequence ID" value="AAK05419"/>
    <property type="gene ID" value="L152588"/>
</dbReference>
<dbReference type="KEGG" id="lla:L152588"/>
<dbReference type="PATRIC" id="fig|272623.7.peg.1425"/>
<dbReference type="eggNOG" id="COG0419">
    <property type="taxonomic scope" value="Bacteria"/>
</dbReference>
<dbReference type="HOGENOM" id="CLU_004785_2_0_9"/>
<dbReference type="OrthoDB" id="9795626at2"/>
<dbReference type="Proteomes" id="UP000002196">
    <property type="component" value="Chromosome"/>
</dbReference>
<dbReference type="GO" id="GO:0005524">
    <property type="term" value="F:ATP binding"/>
    <property type="evidence" value="ECO:0007669"/>
    <property type="project" value="UniProtKB-KW"/>
</dbReference>
<dbReference type="GO" id="GO:0016887">
    <property type="term" value="F:ATP hydrolysis activity"/>
    <property type="evidence" value="ECO:0007669"/>
    <property type="project" value="InterPro"/>
</dbReference>
<dbReference type="GO" id="GO:0004519">
    <property type="term" value="F:endonuclease activity"/>
    <property type="evidence" value="ECO:0007669"/>
    <property type="project" value="UniProtKB-KW"/>
</dbReference>
<dbReference type="GO" id="GO:0004527">
    <property type="term" value="F:exonuclease activity"/>
    <property type="evidence" value="ECO:0007669"/>
    <property type="project" value="UniProtKB-KW"/>
</dbReference>
<dbReference type="GO" id="GO:0006310">
    <property type="term" value="P:DNA recombination"/>
    <property type="evidence" value="ECO:0007669"/>
    <property type="project" value="UniProtKB-KW"/>
</dbReference>
<dbReference type="GO" id="GO:0006260">
    <property type="term" value="P:DNA replication"/>
    <property type="evidence" value="ECO:0007669"/>
    <property type="project" value="UniProtKB-KW"/>
</dbReference>
<dbReference type="GO" id="GO:0006302">
    <property type="term" value="P:double-strand break repair"/>
    <property type="evidence" value="ECO:0007669"/>
    <property type="project" value="InterPro"/>
</dbReference>
<dbReference type="CDD" id="cd03279">
    <property type="entry name" value="ABC_sbcCD"/>
    <property type="match status" value="1"/>
</dbReference>
<dbReference type="Gene3D" id="3.40.50.300">
    <property type="entry name" value="P-loop containing nucleotide triphosphate hydrolases"/>
    <property type="match status" value="2"/>
</dbReference>
<dbReference type="InterPro" id="IPR027417">
    <property type="entry name" value="P-loop_NTPase"/>
</dbReference>
<dbReference type="InterPro" id="IPR038729">
    <property type="entry name" value="Rad50/SbcC_AAA"/>
</dbReference>
<dbReference type="PANTHER" id="PTHR32114">
    <property type="entry name" value="ABC TRANSPORTER ABCH.3"/>
    <property type="match status" value="1"/>
</dbReference>
<dbReference type="PANTHER" id="PTHR32114:SF2">
    <property type="entry name" value="ABC TRANSPORTER ABCH.3"/>
    <property type="match status" value="1"/>
</dbReference>
<dbReference type="Pfam" id="PF13476">
    <property type="entry name" value="AAA_23"/>
    <property type="match status" value="1"/>
</dbReference>
<dbReference type="Pfam" id="PF13558">
    <property type="entry name" value="SbcC_Walker_B"/>
    <property type="match status" value="1"/>
</dbReference>
<dbReference type="SUPFAM" id="SSF52540">
    <property type="entry name" value="P-loop containing nucleoside triphosphate hydrolases"/>
    <property type="match status" value="1"/>
</dbReference>
<proteinExistence type="inferred from homology"/>
<comment type="function">
    <text evidence="1">SbcCD cleaves DNA hairpin structures. These structures can inhibit DNA replication and are intermediates in certain DNA recombination reactions. The complex acts as a 3'-&gt;5' double strand exonuclease that can open hairpins. It also has a 5' single-strand endonuclease activity (By similarity).</text>
</comment>
<comment type="subunit">
    <text evidence="1">Heterodimer of SbcC and SbcD.</text>
</comment>
<comment type="similarity">
    <text evidence="3">Belongs to the SMC family. SbcC subfamily.</text>
</comment>
<protein>
    <recommendedName>
        <fullName>Nuclease SbcCD subunit C</fullName>
    </recommendedName>
</protein>
<evidence type="ECO:0000250" key="1"/>
<evidence type="ECO:0000255" key="2"/>
<evidence type="ECO:0000305" key="3"/>
<accession>Q9CFZ0</accession>
<sequence>MKPIYLEMNYFGPHENSVVDFRLLDESPIFLISGDTGAGKSTIFDAMTYALFGTTTGDRDAKEMRSQFATADDRTSVTFYFKQGNLLYRIERSPEQKLSKKRGSGSTLQKSTAKLAIVDRVKGIEKNNIAINPKNVGEEITRLLHLNAEQFKKIILLPQNDFSRFLKSSTPDKEAILKRIFGTYIFTSFSNEIKAKNSEMNAVYLEYDRKQQNLYESSIWNPIELKELEDAAEQEKLDLVTSLWKDRVARKNEIEGQTFEQEEKVISIEIAYKSALELENQFKNLNNLENDYQQNIIEKSAIFEENSEYLKKLKWAFPLKESIHELEQDIKQSKSVKNNIAGIISEKAKDEILLKKLTNEKEDLNKQQENINENKKVAEKIFIQIQLSLQVEKKQSKVEELKLEQADNLTLLESFKANLGQAAENISTLQDDVISDDYFINKREERNQLELTFRGKLIPTFQKVKHSKDDIVGLELKLKENTIALSENKDNLEKAKFAYNEKLKGRRRLMIAQLQSELQEGEACPVCGALEHPFTETIEESSYKELGNLLKEIDESQKKQTVLLEKNKQLQQLKTELKTSLDLKKIEADEFEKELSILYSEFIADYSQIFPDSFDEVSIDESLLNLTKSLELEEVKNDETKVKLADLESKKLELQEKVKDFEYSNQEFNRQIENLNAEITEIGITETSYNLIRKRNRLMEKADLFEKHLSELMAQLSDIKIKISSQTASLNSFESQEATLLERISANKEKIKEKFSEQEAFTTEFQILKEWAYDDDLIQISQKVEQYKADKARLKVEIKNIQQLIQNKKRPNLALIEEEKKQTNENYVFLQKKLVSAENEVEQAKSILSELKKVIKQQDKDASKKSAITKLYNAISGRASEDKLRLETYVVQNYLEKILDYANLHFINQLSNNRYRFELAGEGNNRRMDHGLDINIYDNETGAARSADTLSGGETFIAALSIALALSEVVQNTANGVQIEALFIDEGFGSLDQETLQKAMQALEQIGENRLVGVISHVEEMKATIGQRIIINKMGDGRSNIKSVIK</sequence>
<gene>
    <name type="primary">sbcC</name>
    <name type="ordered locus">LL1321</name>
    <name type="ORF">L152588</name>
</gene>
<feature type="chain" id="PRO_0000105865" description="Nuclease SbcCD subunit C">
    <location>
        <begin position="1"/>
        <end position="1046"/>
    </location>
</feature>
<feature type="coiled-coil region" evidence="2">
    <location>
        <begin position="223"/>
        <end position="239"/>
    </location>
</feature>
<feature type="coiled-coil region" evidence="2">
    <location>
        <begin position="268"/>
        <end position="432"/>
    </location>
</feature>
<feature type="coiled-coil region" evidence="2">
    <location>
        <begin position="468"/>
        <end position="505"/>
    </location>
</feature>
<feature type="coiled-coil region" evidence="2">
    <location>
        <begin position="543"/>
        <end position="867"/>
    </location>
</feature>
<feature type="binding site" evidence="2">
    <location>
        <begin position="34"/>
        <end position="41"/>
    </location>
    <ligand>
        <name>ATP</name>
        <dbReference type="ChEBI" id="CHEBI:30616"/>
    </ligand>
</feature>
<keyword id="KW-0067">ATP-binding</keyword>
<keyword id="KW-0175">Coiled coil</keyword>
<keyword id="KW-0233">DNA recombination</keyword>
<keyword id="KW-0235">DNA replication</keyword>
<keyword id="KW-0255">Endonuclease</keyword>
<keyword id="KW-0269">Exonuclease</keyword>
<keyword id="KW-0378">Hydrolase</keyword>
<keyword id="KW-0540">Nuclease</keyword>
<keyword id="KW-0547">Nucleotide-binding</keyword>
<keyword id="KW-1185">Reference proteome</keyword>
<organism>
    <name type="scientific">Lactococcus lactis subsp. lactis (strain IL1403)</name>
    <name type="common">Streptococcus lactis</name>
    <dbReference type="NCBI Taxonomy" id="272623"/>
    <lineage>
        <taxon>Bacteria</taxon>
        <taxon>Bacillati</taxon>
        <taxon>Bacillota</taxon>
        <taxon>Bacilli</taxon>
        <taxon>Lactobacillales</taxon>
        <taxon>Streptococcaceae</taxon>
        <taxon>Lactococcus</taxon>
    </lineage>
</organism>
<name>SBCC_LACLA</name>